<evidence type="ECO:0000255" key="1">
    <source>
        <dbReference type="HAMAP-Rule" id="MF_01345"/>
    </source>
</evidence>
<evidence type="ECO:0000305" key="2"/>
<accession>Q2G8X1</accession>
<keyword id="KW-1185">Reference proteome</keyword>
<keyword id="KW-0687">Ribonucleoprotein</keyword>
<keyword id="KW-0689">Ribosomal protein</keyword>
<keyword id="KW-0694">RNA-binding</keyword>
<keyword id="KW-0699">rRNA-binding</keyword>
<dbReference type="EMBL" id="CP000248">
    <property type="protein sequence ID" value="ABD25702.1"/>
    <property type="molecule type" value="Genomic_DNA"/>
</dbReference>
<dbReference type="RefSeq" id="WP_011444916.1">
    <property type="nucleotide sequence ID" value="NC_007794.1"/>
</dbReference>
<dbReference type="SMR" id="Q2G8X1"/>
<dbReference type="STRING" id="279238.Saro_1258"/>
<dbReference type="KEGG" id="nar:Saro_1258"/>
<dbReference type="eggNOG" id="COG0186">
    <property type="taxonomic scope" value="Bacteria"/>
</dbReference>
<dbReference type="HOGENOM" id="CLU_073626_1_1_5"/>
<dbReference type="Proteomes" id="UP000009134">
    <property type="component" value="Chromosome"/>
</dbReference>
<dbReference type="GO" id="GO:0022627">
    <property type="term" value="C:cytosolic small ribosomal subunit"/>
    <property type="evidence" value="ECO:0007669"/>
    <property type="project" value="TreeGrafter"/>
</dbReference>
<dbReference type="GO" id="GO:0019843">
    <property type="term" value="F:rRNA binding"/>
    <property type="evidence" value="ECO:0007669"/>
    <property type="project" value="UniProtKB-UniRule"/>
</dbReference>
<dbReference type="GO" id="GO:0003735">
    <property type="term" value="F:structural constituent of ribosome"/>
    <property type="evidence" value="ECO:0007669"/>
    <property type="project" value="InterPro"/>
</dbReference>
<dbReference type="GO" id="GO:0006412">
    <property type="term" value="P:translation"/>
    <property type="evidence" value="ECO:0007669"/>
    <property type="project" value="UniProtKB-UniRule"/>
</dbReference>
<dbReference type="CDD" id="cd00364">
    <property type="entry name" value="Ribosomal_uS17"/>
    <property type="match status" value="1"/>
</dbReference>
<dbReference type="Gene3D" id="2.40.50.140">
    <property type="entry name" value="Nucleic acid-binding proteins"/>
    <property type="match status" value="1"/>
</dbReference>
<dbReference type="HAMAP" id="MF_01345_B">
    <property type="entry name" value="Ribosomal_uS17_B"/>
    <property type="match status" value="1"/>
</dbReference>
<dbReference type="InterPro" id="IPR012340">
    <property type="entry name" value="NA-bd_OB-fold"/>
</dbReference>
<dbReference type="InterPro" id="IPR000266">
    <property type="entry name" value="Ribosomal_uS17"/>
</dbReference>
<dbReference type="InterPro" id="IPR019984">
    <property type="entry name" value="Ribosomal_uS17_bact/chlr"/>
</dbReference>
<dbReference type="NCBIfam" id="NF004123">
    <property type="entry name" value="PRK05610.1"/>
    <property type="match status" value="1"/>
</dbReference>
<dbReference type="NCBIfam" id="TIGR03635">
    <property type="entry name" value="uS17_bact"/>
    <property type="match status" value="1"/>
</dbReference>
<dbReference type="PANTHER" id="PTHR10744">
    <property type="entry name" value="40S RIBOSOMAL PROTEIN S11 FAMILY MEMBER"/>
    <property type="match status" value="1"/>
</dbReference>
<dbReference type="PANTHER" id="PTHR10744:SF1">
    <property type="entry name" value="SMALL RIBOSOMAL SUBUNIT PROTEIN US17M"/>
    <property type="match status" value="1"/>
</dbReference>
<dbReference type="Pfam" id="PF00366">
    <property type="entry name" value="Ribosomal_S17"/>
    <property type="match status" value="1"/>
</dbReference>
<dbReference type="PRINTS" id="PR00973">
    <property type="entry name" value="RIBOSOMALS17"/>
</dbReference>
<dbReference type="SUPFAM" id="SSF50249">
    <property type="entry name" value="Nucleic acid-binding proteins"/>
    <property type="match status" value="1"/>
</dbReference>
<sequence length="89" mass="10010">MPKRILVGTVVSDKTDKTVVVKVERKVKHPLYGKIIRRSKKYHAHDEANAFKTGETVRIEETAPISKLKTWKVIDRVQAGKGTAIEADV</sequence>
<gene>
    <name evidence="1" type="primary">rpsQ</name>
    <name type="ordered locus">Saro_1258</name>
</gene>
<reference key="1">
    <citation type="submission" date="2006-01" db="EMBL/GenBank/DDBJ databases">
        <title>Complete sequence of Novosphingobium aromaticivorans DSM 12444.</title>
        <authorList>
            <consortium name="US DOE Joint Genome Institute"/>
            <person name="Copeland A."/>
            <person name="Lucas S."/>
            <person name="Lapidus A."/>
            <person name="Barry K."/>
            <person name="Detter J.C."/>
            <person name="Glavina T."/>
            <person name="Hammon N."/>
            <person name="Israni S."/>
            <person name="Pitluck S."/>
            <person name="Chain P."/>
            <person name="Malfatti S."/>
            <person name="Shin M."/>
            <person name="Vergez L."/>
            <person name="Schmutz J."/>
            <person name="Larimer F."/>
            <person name="Land M."/>
            <person name="Kyrpides N."/>
            <person name="Ivanova N."/>
            <person name="Fredrickson J."/>
            <person name="Balkwill D."/>
            <person name="Romine M.F."/>
            <person name="Richardson P."/>
        </authorList>
    </citation>
    <scope>NUCLEOTIDE SEQUENCE [LARGE SCALE GENOMIC DNA]</scope>
    <source>
        <strain>ATCC 700278 / DSM 12444 / CCUG 56034 / CIP 105152 / NBRC 16084 / F199</strain>
    </source>
</reference>
<protein>
    <recommendedName>
        <fullName evidence="1">Small ribosomal subunit protein uS17</fullName>
    </recommendedName>
    <alternativeName>
        <fullName evidence="2">30S ribosomal protein S17</fullName>
    </alternativeName>
</protein>
<organism>
    <name type="scientific">Novosphingobium aromaticivorans (strain ATCC 700278 / DSM 12444 / CCUG 56034 / CIP 105152 / NBRC 16084 / F199)</name>
    <dbReference type="NCBI Taxonomy" id="279238"/>
    <lineage>
        <taxon>Bacteria</taxon>
        <taxon>Pseudomonadati</taxon>
        <taxon>Pseudomonadota</taxon>
        <taxon>Alphaproteobacteria</taxon>
        <taxon>Sphingomonadales</taxon>
        <taxon>Sphingomonadaceae</taxon>
        <taxon>Novosphingobium</taxon>
    </lineage>
</organism>
<name>RS17_NOVAD</name>
<proteinExistence type="inferred from homology"/>
<feature type="chain" id="PRO_0000233524" description="Small ribosomal subunit protein uS17">
    <location>
        <begin position="1"/>
        <end position="89"/>
    </location>
</feature>
<comment type="function">
    <text evidence="1">One of the primary rRNA binding proteins, it binds specifically to the 5'-end of 16S ribosomal RNA.</text>
</comment>
<comment type="subunit">
    <text evidence="1">Part of the 30S ribosomal subunit.</text>
</comment>
<comment type="similarity">
    <text evidence="1">Belongs to the universal ribosomal protein uS17 family.</text>
</comment>